<organism>
    <name type="scientific">Aptera fusca</name>
    <name type="common">Cape Mountain cockroach</name>
    <name type="synonym">Giant Table Mountain cockroach</name>
    <dbReference type="NCBI Taxonomy" id="344696"/>
    <lineage>
        <taxon>Eukaryota</taxon>
        <taxon>Metazoa</taxon>
        <taxon>Ecdysozoa</taxon>
        <taxon>Arthropoda</taxon>
        <taxon>Hexapoda</taxon>
        <taxon>Insecta</taxon>
        <taxon>Pterygota</taxon>
        <taxon>Neoptera</taxon>
        <taxon>Polyneoptera</taxon>
        <taxon>Dictyoptera</taxon>
        <taxon>Blattodea</taxon>
        <taxon>Blaberoidea</taxon>
        <taxon>Blaberidae</taxon>
        <taxon>Epilamprinae</taxon>
        <taxon>Aptera</taxon>
    </lineage>
</organism>
<protein>
    <recommendedName>
        <fullName evidence="1">Hypertrehalosaemic factor</fullName>
    </recommendedName>
    <alternativeName>
        <fullName evidence="4">Adipokinetic hormone 1</fullName>
        <shortName evidence="4">AptFu-AKH-1</shortName>
    </alternativeName>
    <alternativeName>
        <fullName evidence="1">Hypertrehalosaemic neuropeptide</fullName>
    </alternativeName>
</protein>
<sequence length="10" mass="1092">QVNFSPGWGT</sequence>
<accession>P85533</accession>
<keyword id="KW-0027">Amidation</keyword>
<keyword id="KW-0903">Direct protein sequencing</keyword>
<keyword id="KW-0372">Hormone</keyword>
<keyword id="KW-0527">Neuropeptide</keyword>
<keyword id="KW-0873">Pyrrolidone carboxylic acid</keyword>
<keyword id="KW-0964">Secreted</keyword>
<evidence type="ECO:0000250" key="1">
    <source>
        <dbReference type="UniProtKB" id="P67790"/>
    </source>
</evidence>
<evidence type="ECO:0000255" key="2"/>
<evidence type="ECO:0000269" key="3">
    <source>
    </source>
</evidence>
<evidence type="ECO:0000303" key="4">
    <source>
    </source>
</evidence>
<evidence type="ECO:0000305" key="5"/>
<reference evidence="5" key="1">
    <citation type="journal article" date="2009" name="BMC Evol. Biol.">
        <title>A proteomic approach for studying insect phylogeny: CAPA peptides of ancient insect taxa (Dictyoptera, Blattoptera) as a test case.</title>
        <authorList>
            <person name="Roth S."/>
            <person name="Fromm B."/>
            <person name="Gaede G."/>
            <person name="Predel R."/>
        </authorList>
    </citation>
    <scope>PROTEIN SEQUENCE</scope>
    <scope>PYROGLUTAMATE FORMATION AT GLN-1</scope>
    <scope>AMIDATION AT THR-10</scope>
    <source>
        <tissue evidence="3">Corpora cardiaca</tissue>
    </source>
</reference>
<name>HTF_APTFU</name>
<feature type="peptide" id="PRO_0000378631" description="Hypertrehalosaemic factor" evidence="3">
    <location>
        <begin position="1"/>
        <end position="10"/>
    </location>
</feature>
<feature type="modified residue" description="Pyrrolidone carboxylic acid" evidence="3">
    <location>
        <position position="1"/>
    </location>
</feature>
<feature type="modified residue" description="Threonine amide" evidence="3">
    <location>
        <position position="10"/>
    </location>
</feature>
<comment type="function">
    <text evidence="5">Hypertrehalosaemic factors are neuropeptides that elevate the level of trehalose in the hemolymph (trehalose is the major carbohydrate in the hemolymph of insects).</text>
</comment>
<comment type="subcellular location">
    <subcellularLocation>
        <location evidence="5">Secreted</location>
    </subcellularLocation>
</comment>
<comment type="similarity">
    <text evidence="2">Belongs to the AKH/HRTH/RPCH family.</text>
</comment>
<dbReference type="GO" id="GO:0005576">
    <property type="term" value="C:extracellular region"/>
    <property type="evidence" value="ECO:0007669"/>
    <property type="project" value="UniProtKB-SubCell"/>
</dbReference>
<dbReference type="GO" id="GO:0005179">
    <property type="term" value="F:hormone activity"/>
    <property type="evidence" value="ECO:0007669"/>
    <property type="project" value="UniProtKB-KW"/>
</dbReference>
<dbReference type="GO" id="GO:0007218">
    <property type="term" value="P:neuropeptide signaling pathway"/>
    <property type="evidence" value="ECO:0007669"/>
    <property type="project" value="UniProtKB-KW"/>
</dbReference>
<dbReference type="InterPro" id="IPR002047">
    <property type="entry name" value="Adipokinetic_hormone_CS"/>
</dbReference>
<dbReference type="PROSITE" id="PS00256">
    <property type="entry name" value="AKH"/>
    <property type="match status" value="1"/>
</dbReference>
<proteinExistence type="evidence at protein level"/>